<evidence type="ECO:0000250" key="1"/>
<evidence type="ECO:0000255" key="2"/>
<evidence type="ECO:0000305" key="3"/>
<comment type="subcellular location">
    <subcellularLocation>
        <location evidence="3">Secreted</location>
    </subcellularLocation>
</comment>
<comment type="similarity">
    <text evidence="3">Belongs to the 'GDSL' lipolytic enzyme family.</text>
</comment>
<accession>Q9SZW7</accession>
<accession>Q8LD78</accession>
<keyword id="KW-0325">Glycoprotein</keyword>
<keyword id="KW-0378">Hydrolase</keyword>
<keyword id="KW-0442">Lipid degradation</keyword>
<keyword id="KW-0443">Lipid metabolism</keyword>
<keyword id="KW-1185">Reference proteome</keyword>
<keyword id="KW-0964">Secreted</keyword>
<keyword id="KW-0732">Signal</keyword>
<dbReference type="EC" id="3.1.1.-"/>
<dbReference type="EMBL" id="AL078464">
    <property type="protein sequence ID" value="CAB43849.1"/>
    <property type="molecule type" value="Genomic_DNA"/>
</dbReference>
<dbReference type="EMBL" id="AL161576">
    <property type="protein sequence ID" value="CAB81007.1"/>
    <property type="molecule type" value="Genomic_DNA"/>
</dbReference>
<dbReference type="EMBL" id="CP002687">
    <property type="protein sequence ID" value="AEE85725.1"/>
    <property type="molecule type" value="Genomic_DNA"/>
</dbReference>
<dbReference type="EMBL" id="AF370501">
    <property type="protein sequence ID" value="AAK43878.1"/>
    <property type="molecule type" value="mRNA"/>
</dbReference>
<dbReference type="EMBL" id="BT000343">
    <property type="protein sequence ID" value="AAN15662.1"/>
    <property type="molecule type" value="mRNA"/>
</dbReference>
<dbReference type="EMBL" id="AY086159">
    <property type="protein sequence ID" value="AAM63364.1"/>
    <property type="molecule type" value="mRNA"/>
</dbReference>
<dbReference type="PIR" id="T08990">
    <property type="entry name" value="T08990"/>
</dbReference>
<dbReference type="SMR" id="Q9SZW7"/>
<dbReference type="FunCoup" id="Q9SZW7">
    <property type="interactions" value="86"/>
</dbReference>
<dbReference type="STRING" id="3702.Q9SZW7"/>
<dbReference type="GlyGen" id="Q9SZW7">
    <property type="glycosylation" value="1 site"/>
</dbReference>
<dbReference type="PaxDb" id="3702-AT4G30140.1"/>
<dbReference type="ProteomicsDB" id="221985"/>
<dbReference type="EnsemblPlants" id="AT4G30140.1">
    <property type="protein sequence ID" value="AT4G30140.1"/>
    <property type="gene ID" value="AT4G30140"/>
</dbReference>
<dbReference type="GeneID" id="829137"/>
<dbReference type="Gramene" id="AT4G30140.1">
    <property type="protein sequence ID" value="AT4G30140.1"/>
    <property type="gene ID" value="AT4G30140"/>
</dbReference>
<dbReference type="KEGG" id="ath:AT4G30140"/>
<dbReference type="Araport" id="AT4G30140"/>
<dbReference type="TAIR" id="AT4G30140">
    <property type="gene designation" value="CDEF1"/>
</dbReference>
<dbReference type="eggNOG" id="ENOG502SIKN">
    <property type="taxonomic scope" value="Eukaryota"/>
</dbReference>
<dbReference type="HOGENOM" id="CLU_015101_0_0_1"/>
<dbReference type="InParanoid" id="Q9SZW7"/>
<dbReference type="OMA" id="RKQINNH"/>
<dbReference type="OrthoDB" id="1683520at2759"/>
<dbReference type="PhylomeDB" id="Q9SZW7"/>
<dbReference type="BioCyc" id="ARA:AT4G30140-MONOMER"/>
<dbReference type="BRENDA" id="3.1.1.74">
    <property type="organism ID" value="399"/>
</dbReference>
<dbReference type="PRO" id="PR:Q9SZW7"/>
<dbReference type="Proteomes" id="UP000006548">
    <property type="component" value="Chromosome 4"/>
</dbReference>
<dbReference type="ExpressionAtlas" id="Q9SZW7">
    <property type="expression patterns" value="baseline and differential"/>
</dbReference>
<dbReference type="GO" id="GO:0005615">
    <property type="term" value="C:extracellular space"/>
    <property type="evidence" value="ECO:0000314"/>
    <property type="project" value="TAIR"/>
</dbReference>
<dbReference type="GO" id="GO:0005886">
    <property type="term" value="C:plasma membrane"/>
    <property type="evidence" value="ECO:0007005"/>
    <property type="project" value="TAIR"/>
</dbReference>
<dbReference type="GO" id="GO:0090406">
    <property type="term" value="C:pollen tube"/>
    <property type="evidence" value="ECO:0000314"/>
    <property type="project" value="TAIR"/>
</dbReference>
<dbReference type="GO" id="GO:0050525">
    <property type="term" value="F:cutinase activity"/>
    <property type="evidence" value="ECO:0000314"/>
    <property type="project" value="TAIR"/>
</dbReference>
<dbReference type="GO" id="GO:0016042">
    <property type="term" value="P:lipid catabolic process"/>
    <property type="evidence" value="ECO:0007669"/>
    <property type="project" value="UniProtKB-KW"/>
</dbReference>
<dbReference type="CDD" id="cd01837">
    <property type="entry name" value="SGNH_plant_lipase_like"/>
    <property type="match status" value="1"/>
</dbReference>
<dbReference type="FunFam" id="3.40.50.1110:FF:000082">
    <property type="entry name" value="GDSL esterase/lipase At4g30140"/>
    <property type="match status" value="1"/>
</dbReference>
<dbReference type="Gene3D" id="3.40.50.1110">
    <property type="entry name" value="SGNH hydrolase"/>
    <property type="match status" value="1"/>
</dbReference>
<dbReference type="InterPro" id="IPR001087">
    <property type="entry name" value="GDSL"/>
</dbReference>
<dbReference type="InterPro" id="IPR051238">
    <property type="entry name" value="GDSL_esterase/lipase"/>
</dbReference>
<dbReference type="InterPro" id="IPR036514">
    <property type="entry name" value="SGNH_hydro_sf"/>
</dbReference>
<dbReference type="InterPro" id="IPR035669">
    <property type="entry name" value="SGNH_plant_lipase-like"/>
</dbReference>
<dbReference type="PANTHER" id="PTHR45650">
    <property type="entry name" value="GDSL-LIKE LIPASE/ACYLHYDROLASE-RELATED"/>
    <property type="match status" value="1"/>
</dbReference>
<dbReference type="PANTHER" id="PTHR45650:SF25">
    <property type="entry name" value="GENOME ASSEMBLY, CHROMOSOME: A08"/>
    <property type="match status" value="1"/>
</dbReference>
<dbReference type="Pfam" id="PF00657">
    <property type="entry name" value="Lipase_GDSL"/>
    <property type="match status" value="1"/>
</dbReference>
<proteinExistence type="evidence at transcript level"/>
<protein>
    <recommendedName>
        <fullName>GDSL esterase/lipase At4g30140</fullName>
        <ecNumber>3.1.1.-</ecNumber>
    </recommendedName>
    <alternativeName>
        <fullName>Extracellular lipase At4g30140</fullName>
    </alternativeName>
</protein>
<name>GDL68_ARATH</name>
<feature type="signal peptide" evidence="2">
    <location>
        <begin position="1"/>
        <end position="28"/>
    </location>
</feature>
<feature type="chain" id="PRO_0000367408" description="GDSL esterase/lipase At4g30140">
    <location>
        <begin position="29"/>
        <end position="348"/>
    </location>
</feature>
<feature type="active site" description="Nucleophile" evidence="1">
    <location>
        <position position="40"/>
    </location>
</feature>
<feature type="active site" evidence="1">
    <location>
        <position position="316"/>
    </location>
</feature>
<feature type="active site" evidence="1">
    <location>
        <position position="319"/>
    </location>
</feature>
<feature type="glycosylation site" description="N-linked (GlcNAc...) asparagine" evidence="2">
    <location>
        <position position="342"/>
    </location>
</feature>
<feature type="sequence conflict" description="In Ref. 4; AAM63364." evidence="3" ref="4">
    <original>R</original>
    <variation>P</variation>
    <location>
        <position position="77"/>
    </location>
</feature>
<feature type="sequence conflict" description="In Ref. 4; AAM63364." evidence="3" ref="4">
    <original>A</original>
    <variation>V</variation>
    <location>
        <position position="146"/>
    </location>
</feature>
<organism>
    <name type="scientific">Arabidopsis thaliana</name>
    <name type="common">Mouse-ear cress</name>
    <dbReference type="NCBI Taxonomy" id="3702"/>
    <lineage>
        <taxon>Eukaryota</taxon>
        <taxon>Viridiplantae</taxon>
        <taxon>Streptophyta</taxon>
        <taxon>Embryophyta</taxon>
        <taxon>Tracheophyta</taxon>
        <taxon>Spermatophyta</taxon>
        <taxon>Magnoliopsida</taxon>
        <taxon>eudicotyledons</taxon>
        <taxon>Gunneridae</taxon>
        <taxon>Pentapetalae</taxon>
        <taxon>rosids</taxon>
        <taxon>malvids</taxon>
        <taxon>Brassicales</taxon>
        <taxon>Brassicaceae</taxon>
        <taxon>Camelineae</taxon>
        <taxon>Arabidopsis</taxon>
    </lineage>
</organism>
<reference key="1">
    <citation type="journal article" date="1999" name="Nature">
        <title>Sequence and analysis of chromosome 4 of the plant Arabidopsis thaliana.</title>
        <authorList>
            <person name="Mayer K.F.X."/>
            <person name="Schueller C."/>
            <person name="Wambutt R."/>
            <person name="Murphy G."/>
            <person name="Volckaert G."/>
            <person name="Pohl T."/>
            <person name="Duesterhoeft A."/>
            <person name="Stiekema W."/>
            <person name="Entian K.-D."/>
            <person name="Terryn N."/>
            <person name="Harris B."/>
            <person name="Ansorge W."/>
            <person name="Brandt P."/>
            <person name="Grivell L.A."/>
            <person name="Rieger M."/>
            <person name="Weichselgartner M."/>
            <person name="de Simone V."/>
            <person name="Obermaier B."/>
            <person name="Mache R."/>
            <person name="Mueller M."/>
            <person name="Kreis M."/>
            <person name="Delseny M."/>
            <person name="Puigdomenech P."/>
            <person name="Watson M."/>
            <person name="Schmidtheini T."/>
            <person name="Reichert B."/>
            <person name="Portetelle D."/>
            <person name="Perez-Alonso M."/>
            <person name="Boutry M."/>
            <person name="Bancroft I."/>
            <person name="Vos P."/>
            <person name="Hoheisel J."/>
            <person name="Zimmermann W."/>
            <person name="Wedler H."/>
            <person name="Ridley P."/>
            <person name="Langham S.-A."/>
            <person name="McCullagh B."/>
            <person name="Bilham L."/>
            <person name="Robben J."/>
            <person name="van der Schueren J."/>
            <person name="Grymonprez B."/>
            <person name="Chuang Y.-J."/>
            <person name="Vandenbussche F."/>
            <person name="Braeken M."/>
            <person name="Weltjens I."/>
            <person name="Voet M."/>
            <person name="Bastiaens I."/>
            <person name="Aert R."/>
            <person name="Defoor E."/>
            <person name="Weitzenegger T."/>
            <person name="Bothe G."/>
            <person name="Ramsperger U."/>
            <person name="Hilbert H."/>
            <person name="Braun M."/>
            <person name="Holzer E."/>
            <person name="Brandt A."/>
            <person name="Peters S."/>
            <person name="van Staveren M."/>
            <person name="Dirkse W."/>
            <person name="Mooijman P."/>
            <person name="Klein Lankhorst R."/>
            <person name="Rose M."/>
            <person name="Hauf J."/>
            <person name="Koetter P."/>
            <person name="Berneiser S."/>
            <person name="Hempel S."/>
            <person name="Feldpausch M."/>
            <person name="Lamberth S."/>
            <person name="Van den Daele H."/>
            <person name="De Keyser A."/>
            <person name="Buysshaert C."/>
            <person name="Gielen J."/>
            <person name="Villarroel R."/>
            <person name="De Clercq R."/>
            <person name="van Montagu M."/>
            <person name="Rogers J."/>
            <person name="Cronin A."/>
            <person name="Quail M.A."/>
            <person name="Bray-Allen S."/>
            <person name="Clark L."/>
            <person name="Doggett J."/>
            <person name="Hall S."/>
            <person name="Kay M."/>
            <person name="Lennard N."/>
            <person name="McLay K."/>
            <person name="Mayes R."/>
            <person name="Pettett A."/>
            <person name="Rajandream M.A."/>
            <person name="Lyne M."/>
            <person name="Benes V."/>
            <person name="Rechmann S."/>
            <person name="Borkova D."/>
            <person name="Bloecker H."/>
            <person name="Scharfe M."/>
            <person name="Grimm M."/>
            <person name="Loehnert T.-H."/>
            <person name="Dose S."/>
            <person name="de Haan M."/>
            <person name="Maarse A.C."/>
            <person name="Schaefer M."/>
            <person name="Mueller-Auer S."/>
            <person name="Gabel C."/>
            <person name="Fuchs M."/>
            <person name="Fartmann B."/>
            <person name="Granderath K."/>
            <person name="Dauner D."/>
            <person name="Herzl A."/>
            <person name="Neumann S."/>
            <person name="Argiriou A."/>
            <person name="Vitale D."/>
            <person name="Liguori R."/>
            <person name="Piravandi E."/>
            <person name="Massenet O."/>
            <person name="Quigley F."/>
            <person name="Clabauld G."/>
            <person name="Muendlein A."/>
            <person name="Felber R."/>
            <person name="Schnabl S."/>
            <person name="Hiller R."/>
            <person name="Schmidt W."/>
            <person name="Lecharny A."/>
            <person name="Aubourg S."/>
            <person name="Chefdor F."/>
            <person name="Cooke R."/>
            <person name="Berger C."/>
            <person name="Monfort A."/>
            <person name="Casacuberta E."/>
            <person name="Gibbons T."/>
            <person name="Weber N."/>
            <person name="Vandenbol M."/>
            <person name="Bargues M."/>
            <person name="Terol J."/>
            <person name="Torres A."/>
            <person name="Perez-Perez A."/>
            <person name="Purnelle B."/>
            <person name="Bent E."/>
            <person name="Johnson S."/>
            <person name="Tacon D."/>
            <person name="Jesse T."/>
            <person name="Heijnen L."/>
            <person name="Schwarz S."/>
            <person name="Scholler P."/>
            <person name="Heber S."/>
            <person name="Francs P."/>
            <person name="Bielke C."/>
            <person name="Frishman D."/>
            <person name="Haase D."/>
            <person name="Lemcke K."/>
            <person name="Mewes H.-W."/>
            <person name="Stocker S."/>
            <person name="Zaccaria P."/>
            <person name="Bevan M."/>
            <person name="Wilson R.K."/>
            <person name="de la Bastide M."/>
            <person name="Habermann K."/>
            <person name="Parnell L."/>
            <person name="Dedhia N."/>
            <person name="Gnoj L."/>
            <person name="Schutz K."/>
            <person name="Huang E."/>
            <person name="Spiegel L."/>
            <person name="Sekhon M."/>
            <person name="Murray J."/>
            <person name="Sheet P."/>
            <person name="Cordes M."/>
            <person name="Abu-Threideh J."/>
            <person name="Stoneking T."/>
            <person name="Kalicki J."/>
            <person name="Graves T."/>
            <person name="Harmon G."/>
            <person name="Edwards J."/>
            <person name="Latreille P."/>
            <person name="Courtney L."/>
            <person name="Cloud J."/>
            <person name="Abbott A."/>
            <person name="Scott K."/>
            <person name="Johnson D."/>
            <person name="Minx P."/>
            <person name="Bentley D."/>
            <person name="Fulton B."/>
            <person name="Miller N."/>
            <person name="Greco T."/>
            <person name="Kemp K."/>
            <person name="Kramer J."/>
            <person name="Fulton L."/>
            <person name="Mardis E."/>
            <person name="Dante M."/>
            <person name="Pepin K."/>
            <person name="Hillier L.W."/>
            <person name="Nelson J."/>
            <person name="Spieth J."/>
            <person name="Ryan E."/>
            <person name="Andrews S."/>
            <person name="Geisel C."/>
            <person name="Layman D."/>
            <person name="Du H."/>
            <person name="Ali J."/>
            <person name="Berghoff A."/>
            <person name="Jones K."/>
            <person name="Drone K."/>
            <person name="Cotton M."/>
            <person name="Joshu C."/>
            <person name="Antonoiu B."/>
            <person name="Zidanic M."/>
            <person name="Strong C."/>
            <person name="Sun H."/>
            <person name="Lamar B."/>
            <person name="Yordan C."/>
            <person name="Ma P."/>
            <person name="Zhong J."/>
            <person name="Preston R."/>
            <person name="Vil D."/>
            <person name="Shekher M."/>
            <person name="Matero A."/>
            <person name="Shah R."/>
            <person name="Swaby I.K."/>
            <person name="O'Shaughnessy A."/>
            <person name="Rodriguez M."/>
            <person name="Hoffman J."/>
            <person name="Till S."/>
            <person name="Granat S."/>
            <person name="Shohdy N."/>
            <person name="Hasegawa A."/>
            <person name="Hameed A."/>
            <person name="Lodhi M."/>
            <person name="Johnson A."/>
            <person name="Chen E."/>
            <person name="Marra M.A."/>
            <person name="Martienssen R."/>
            <person name="McCombie W.R."/>
        </authorList>
    </citation>
    <scope>NUCLEOTIDE SEQUENCE [LARGE SCALE GENOMIC DNA]</scope>
    <source>
        <strain>cv. Columbia</strain>
    </source>
</reference>
<reference key="2">
    <citation type="journal article" date="2017" name="Plant J.">
        <title>Araport11: a complete reannotation of the Arabidopsis thaliana reference genome.</title>
        <authorList>
            <person name="Cheng C.Y."/>
            <person name="Krishnakumar V."/>
            <person name="Chan A.P."/>
            <person name="Thibaud-Nissen F."/>
            <person name="Schobel S."/>
            <person name="Town C.D."/>
        </authorList>
    </citation>
    <scope>GENOME REANNOTATION</scope>
    <source>
        <strain>cv. Columbia</strain>
    </source>
</reference>
<reference key="3">
    <citation type="journal article" date="2003" name="Science">
        <title>Empirical analysis of transcriptional activity in the Arabidopsis genome.</title>
        <authorList>
            <person name="Yamada K."/>
            <person name="Lim J."/>
            <person name="Dale J.M."/>
            <person name="Chen H."/>
            <person name="Shinn P."/>
            <person name="Palm C.J."/>
            <person name="Southwick A.M."/>
            <person name="Wu H.C."/>
            <person name="Kim C.J."/>
            <person name="Nguyen M."/>
            <person name="Pham P.K."/>
            <person name="Cheuk R.F."/>
            <person name="Karlin-Newmann G."/>
            <person name="Liu S.X."/>
            <person name="Lam B."/>
            <person name="Sakano H."/>
            <person name="Wu T."/>
            <person name="Yu G."/>
            <person name="Miranda M."/>
            <person name="Quach H.L."/>
            <person name="Tripp M."/>
            <person name="Chang C.H."/>
            <person name="Lee J.M."/>
            <person name="Toriumi M.J."/>
            <person name="Chan M.M."/>
            <person name="Tang C.C."/>
            <person name="Onodera C.S."/>
            <person name="Deng J.M."/>
            <person name="Akiyama K."/>
            <person name="Ansari Y."/>
            <person name="Arakawa T."/>
            <person name="Banh J."/>
            <person name="Banno F."/>
            <person name="Bowser L."/>
            <person name="Brooks S.Y."/>
            <person name="Carninci P."/>
            <person name="Chao Q."/>
            <person name="Choy N."/>
            <person name="Enju A."/>
            <person name="Goldsmith A.D."/>
            <person name="Gurjal M."/>
            <person name="Hansen N.F."/>
            <person name="Hayashizaki Y."/>
            <person name="Johnson-Hopson C."/>
            <person name="Hsuan V.W."/>
            <person name="Iida K."/>
            <person name="Karnes M."/>
            <person name="Khan S."/>
            <person name="Koesema E."/>
            <person name="Ishida J."/>
            <person name="Jiang P.X."/>
            <person name="Jones T."/>
            <person name="Kawai J."/>
            <person name="Kamiya A."/>
            <person name="Meyers C."/>
            <person name="Nakajima M."/>
            <person name="Narusaka M."/>
            <person name="Seki M."/>
            <person name="Sakurai T."/>
            <person name="Satou M."/>
            <person name="Tamse R."/>
            <person name="Vaysberg M."/>
            <person name="Wallender E.K."/>
            <person name="Wong C."/>
            <person name="Yamamura Y."/>
            <person name="Yuan S."/>
            <person name="Shinozaki K."/>
            <person name="Davis R.W."/>
            <person name="Theologis A."/>
            <person name="Ecker J.R."/>
        </authorList>
    </citation>
    <scope>NUCLEOTIDE SEQUENCE [LARGE SCALE MRNA]</scope>
    <source>
        <strain>cv. Columbia</strain>
    </source>
</reference>
<reference key="4">
    <citation type="submission" date="2002-03" db="EMBL/GenBank/DDBJ databases">
        <title>Full-length cDNA from Arabidopsis thaliana.</title>
        <authorList>
            <person name="Brover V.V."/>
            <person name="Troukhan M.E."/>
            <person name="Alexandrov N.A."/>
            <person name="Lu Y.-P."/>
            <person name="Flavell R.B."/>
            <person name="Feldmann K.A."/>
        </authorList>
    </citation>
    <scope>NUCLEOTIDE SEQUENCE [LARGE SCALE MRNA]</scope>
</reference>
<reference key="5">
    <citation type="journal article" date="2004" name="Prog. Lipid Res.">
        <title>GDSL family of serine esterases/lipases.</title>
        <authorList>
            <person name="Akoh C.C."/>
            <person name="Lee G.-C."/>
            <person name="Liaw Y.-C."/>
            <person name="Huang T.-H."/>
            <person name="Shaw J.-F."/>
        </authorList>
    </citation>
    <scope>REVIEW</scope>
</reference>
<reference key="6">
    <citation type="journal article" date="2008" name="Pak. J. Biol. Sci.">
        <title>Sequence analysis of GDSL lipase gene family in Arabidopsis thaliana.</title>
        <authorList>
            <person name="Ling H."/>
        </authorList>
    </citation>
    <scope>GENE FAMILY</scope>
</reference>
<sequence>MVEGESKALWIILATVFAVAAVAPAVHGQQTPCYFVFGDSVFDNGNNNALNTKAKVNYLPYGIDYFQGPTGRFSNGRNIPDVIAELAGFNNPIPPFAGASQAQANIGLNYASGAGGIREETSENMGERISLRQQVNNHFSAIITAAVPLSRLRQCLYTINIGSNDYLNNYFLSPPTLARRLFNPDQYARSLISLYRIYLTQLYVLGARNVALFGIGKIGCTPRIVATLGGGTGCAEEVNQAVIIFNTKLKALVTDFNNKPGAMFTYVDLFSGNAEDFAALGITVGDRSCCTVNPGEELCAANGPVCPDRNKFIFWDNVHTTEVINTVVANAAFNGPIASPFNISQLVN</sequence>
<gene>
    <name type="ordered locus">At4g30140</name>
    <name type="ORF">F6G3.170</name>
</gene>